<comment type="function">
    <text evidence="1">Involved in the biosynthesis of osmoregulated periplasmic glucans (OPGs).</text>
</comment>
<comment type="pathway">
    <text evidence="1">Glycan metabolism; osmoregulated periplasmic glucan (OPG) biosynthesis.</text>
</comment>
<comment type="subcellular location">
    <subcellularLocation>
        <location evidence="1">Cell inner membrane</location>
        <topology evidence="1">Multi-pass membrane protein</topology>
    </subcellularLocation>
</comment>
<comment type="similarity">
    <text evidence="1">Belongs to the glycosyltransferase 2 family. OpgH subfamily.</text>
</comment>
<dbReference type="EC" id="2.4.1.-" evidence="1"/>
<dbReference type="EMBL" id="AE008922">
    <property type="protein sequence ID" value="AAM42785.1"/>
    <property type="molecule type" value="Genomic_DNA"/>
</dbReference>
<dbReference type="RefSeq" id="NP_638861.1">
    <property type="nucleotide sequence ID" value="NC_003902.1"/>
</dbReference>
<dbReference type="STRING" id="190485.XCC3515"/>
<dbReference type="CAZy" id="GT2">
    <property type="family name" value="Glycosyltransferase Family 2"/>
</dbReference>
<dbReference type="EnsemblBacteria" id="AAM42785">
    <property type="protein sequence ID" value="AAM42785"/>
    <property type="gene ID" value="XCC3515"/>
</dbReference>
<dbReference type="KEGG" id="xcc:XCC3515"/>
<dbReference type="PATRIC" id="fig|190485.4.peg.3758"/>
<dbReference type="eggNOG" id="COG2943">
    <property type="taxonomic scope" value="Bacteria"/>
</dbReference>
<dbReference type="HOGENOM" id="CLU_015730_1_0_6"/>
<dbReference type="OrthoDB" id="9775281at2"/>
<dbReference type="UniPathway" id="UPA00637"/>
<dbReference type="Proteomes" id="UP000001010">
    <property type="component" value="Chromosome"/>
</dbReference>
<dbReference type="GO" id="GO:0005886">
    <property type="term" value="C:plasma membrane"/>
    <property type="evidence" value="ECO:0000318"/>
    <property type="project" value="GO_Central"/>
</dbReference>
<dbReference type="GO" id="GO:0016758">
    <property type="term" value="F:hexosyltransferase activity"/>
    <property type="evidence" value="ECO:0000318"/>
    <property type="project" value="GO_Central"/>
</dbReference>
<dbReference type="GO" id="GO:0009250">
    <property type="term" value="P:glucan biosynthetic process"/>
    <property type="evidence" value="ECO:0007669"/>
    <property type="project" value="UniProtKB-UniRule"/>
</dbReference>
<dbReference type="CDD" id="cd04191">
    <property type="entry name" value="Glucan_BSP_MdoH"/>
    <property type="match status" value="1"/>
</dbReference>
<dbReference type="Gene3D" id="3.90.550.10">
    <property type="entry name" value="Spore Coat Polysaccharide Biosynthesis Protein SpsA, Chain A"/>
    <property type="match status" value="1"/>
</dbReference>
<dbReference type="HAMAP" id="MF_01072">
    <property type="entry name" value="MdoH_OpgH"/>
    <property type="match status" value="1"/>
</dbReference>
<dbReference type="InterPro" id="IPR023725">
    <property type="entry name" value="Glucans_biosynth_gluTrFase_H"/>
</dbReference>
<dbReference type="InterPro" id="IPR001173">
    <property type="entry name" value="Glyco_trans_2-like"/>
</dbReference>
<dbReference type="InterPro" id="IPR050321">
    <property type="entry name" value="Glycosyltr_2/OpgH_subfam"/>
</dbReference>
<dbReference type="InterPro" id="IPR029044">
    <property type="entry name" value="Nucleotide-diphossugar_trans"/>
</dbReference>
<dbReference type="NCBIfam" id="NF003956">
    <property type="entry name" value="PRK05454.1-3"/>
    <property type="match status" value="1"/>
</dbReference>
<dbReference type="NCBIfam" id="NF003957">
    <property type="entry name" value="PRK05454.1-4"/>
    <property type="match status" value="1"/>
</dbReference>
<dbReference type="NCBIfam" id="NF003958">
    <property type="entry name" value="PRK05454.2-1"/>
    <property type="match status" value="1"/>
</dbReference>
<dbReference type="NCBIfam" id="NF003962">
    <property type="entry name" value="PRK05454.2-5"/>
    <property type="match status" value="1"/>
</dbReference>
<dbReference type="PANTHER" id="PTHR43867">
    <property type="entry name" value="CELLULOSE SYNTHASE CATALYTIC SUBUNIT A [UDP-FORMING]"/>
    <property type="match status" value="1"/>
</dbReference>
<dbReference type="PANTHER" id="PTHR43867:SF5">
    <property type="entry name" value="GLUCANS BIOSYNTHESIS GLUCOSYLTRANSFERASE H"/>
    <property type="match status" value="1"/>
</dbReference>
<dbReference type="Pfam" id="PF13632">
    <property type="entry name" value="Glyco_trans_2_3"/>
    <property type="match status" value="1"/>
</dbReference>
<dbReference type="SUPFAM" id="SSF53448">
    <property type="entry name" value="Nucleotide-diphospho-sugar transferases"/>
    <property type="match status" value="1"/>
</dbReference>
<feature type="chain" id="PRO_0000210368" description="Glucans biosynthesis glucosyltransferase H">
    <location>
        <begin position="1"/>
        <end position="645"/>
    </location>
</feature>
<feature type="transmembrane region" description="Helical" evidence="1">
    <location>
        <begin position="62"/>
        <end position="84"/>
    </location>
</feature>
<feature type="transmembrane region" description="Helical" evidence="1">
    <location>
        <begin position="99"/>
        <end position="121"/>
    </location>
</feature>
<feature type="transmembrane region" description="Helical" evidence="1">
    <location>
        <begin position="417"/>
        <end position="439"/>
    </location>
</feature>
<feature type="transmembrane region" description="Helical" evidence="1">
    <location>
        <begin position="466"/>
        <end position="488"/>
    </location>
</feature>
<feature type="transmembrane region" description="Helical" evidence="1">
    <location>
        <begin position="501"/>
        <end position="523"/>
    </location>
</feature>
<feature type="transmembrane region" description="Helical" evidence="1">
    <location>
        <begin position="554"/>
        <end position="576"/>
    </location>
</feature>
<feature type="transmembrane region" description="Helical" evidence="1">
    <location>
        <begin position="581"/>
        <end position="603"/>
    </location>
</feature>
<feature type="region of interest" description="Disordered" evidence="2">
    <location>
        <begin position="1"/>
        <end position="28"/>
    </location>
</feature>
<name>OPGH_XANCP</name>
<proteinExistence type="inferred from homology"/>
<organism>
    <name type="scientific">Xanthomonas campestris pv. campestris (strain ATCC 33913 / DSM 3586 / NCPPB 528 / LMG 568 / P 25)</name>
    <dbReference type="NCBI Taxonomy" id="190485"/>
    <lineage>
        <taxon>Bacteria</taxon>
        <taxon>Pseudomonadati</taxon>
        <taxon>Pseudomonadota</taxon>
        <taxon>Gammaproteobacteria</taxon>
        <taxon>Lysobacterales</taxon>
        <taxon>Lysobacteraceae</taxon>
        <taxon>Xanthomonas</taxon>
    </lineage>
</organism>
<reference key="1">
    <citation type="journal article" date="2002" name="Nature">
        <title>Comparison of the genomes of two Xanthomonas pathogens with differing host specificities.</title>
        <authorList>
            <person name="da Silva A.C.R."/>
            <person name="Ferro J.A."/>
            <person name="Reinach F.C."/>
            <person name="Farah C.S."/>
            <person name="Furlan L.R."/>
            <person name="Quaggio R.B."/>
            <person name="Monteiro-Vitorello C.B."/>
            <person name="Van Sluys M.A."/>
            <person name="Almeida N.F. Jr."/>
            <person name="Alves L.M.C."/>
            <person name="do Amaral A.M."/>
            <person name="Bertolini M.C."/>
            <person name="Camargo L.E.A."/>
            <person name="Camarotte G."/>
            <person name="Cannavan F."/>
            <person name="Cardozo J."/>
            <person name="Chambergo F."/>
            <person name="Ciapina L.P."/>
            <person name="Cicarelli R.M.B."/>
            <person name="Coutinho L.L."/>
            <person name="Cursino-Santos J.R."/>
            <person name="El-Dorry H."/>
            <person name="Faria J.B."/>
            <person name="Ferreira A.J.S."/>
            <person name="Ferreira R.C.C."/>
            <person name="Ferro M.I.T."/>
            <person name="Formighieri E.F."/>
            <person name="Franco M.C."/>
            <person name="Greggio C.C."/>
            <person name="Gruber A."/>
            <person name="Katsuyama A.M."/>
            <person name="Kishi L.T."/>
            <person name="Leite R.P."/>
            <person name="Lemos E.G.M."/>
            <person name="Lemos M.V.F."/>
            <person name="Locali E.C."/>
            <person name="Machado M.A."/>
            <person name="Madeira A.M.B.N."/>
            <person name="Martinez-Rossi N.M."/>
            <person name="Martins E.C."/>
            <person name="Meidanis J."/>
            <person name="Menck C.F.M."/>
            <person name="Miyaki C.Y."/>
            <person name="Moon D.H."/>
            <person name="Moreira L.M."/>
            <person name="Novo M.T.M."/>
            <person name="Okura V.K."/>
            <person name="Oliveira M.C."/>
            <person name="Oliveira V.R."/>
            <person name="Pereira H.A."/>
            <person name="Rossi A."/>
            <person name="Sena J.A.D."/>
            <person name="Silva C."/>
            <person name="de Souza R.F."/>
            <person name="Spinola L.A.F."/>
            <person name="Takita M.A."/>
            <person name="Tamura R.E."/>
            <person name="Teixeira E.C."/>
            <person name="Tezza R.I.D."/>
            <person name="Trindade dos Santos M."/>
            <person name="Truffi D."/>
            <person name="Tsai S.M."/>
            <person name="White F.F."/>
            <person name="Setubal J.C."/>
            <person name="Kitajima J.P."/>
        </authorList>
    </citation>
    <scope>NUCLEOTIDE SEQUENCE [LARGE SCALE GENOMIC DNA]</scope>
    <source>
        <strain>ATCC 33913 / DSM 3586 / NCPPB 528 / LMG 568 / P 25</strain>
    </source>
</reference>
<accession>Q8P532</accession>
<keyword id="KW-0997">Cell inner membrane</keyword>
<keyword id="KW-1003">Cell membrane</keyword>
<keyword id="KW-0328">Glycosyltransferase</keyword>
<keyword id="KW-0472">Membrane</keyword>
<keyword id="KW-1185">Reference proteome</keyword>
<keyword id="KW-0808">Transferase</keyword>
<keyword id="KW-0812">Transmembrane</keyword>
<keyword id="KW-1133">Transmembrane helix</keyword>
<sequence>MDGTVTLSPAPTDLPPVSSLDAGQPTLPPEAPLAMPEQSLREGSLQVRHQRTSPMGIGLRRFYLIGGTLTATAVAVWVMLSVLWPGGFSVLEGCLLGLFVLLFAWIAMSFASAVAGFITVVARAGRKLGIDPDAPLPSLHTRTALLMPTYNEDPRRLLAGLQAIYESVAETGQLEHFDFFVLSDTTREHIGRAEEQVYAELCDSVGGHGRIFYRRRADNAARKAGNVADWVRRFGGNYPQMLILDADSVMTGDTIVRLVAGMEDNPDVGLIQTLPAVVNGQTLFARMQQFGGRVYGPIIAFGVAWWHGAESNYWGHNAIIRTQAFADHAGLPSLRGRKPFGGHVLSHDFVEAALMRRGGWAMHMVPYLQGSYEEGPPTLTDLLVRDRRWCQGNLQHAKVVGAKGLHWISRMHMMIGIGHYFTAPMWGMLMLVGIGIPLAGAGIDLAQGLPFSPARYWHGSSDGNAIWIFVCTMFVLLAPKLLGYIALLLNPRERRACGGAIRAALSILLETVLAALMAPVVMYLQSRGVFEVLAGKDSGWDAQVRDDGKLSWPALIRSYGGLSVFGLFMGTLAYLVSPSLAAWMAPVIVGMVVSIPVVAVTSLRRTGLALRRAGIFCIPEELDPPKVLVRASELRRAAALEPSLI</sequence>
<gene>
    <name evidence="1" type="primary">opgH</name>
    <name type="synonym">hrpM</name>
    <name type="ordered locus">XCC3515</name>
</gene>
<protein>
    <recommendedName>
        <fullName evidence="1">Glucans biosynthesis glucosyltransferase H</fullName>
        <ecNumber evidence="1">2.4.1.-</ecNumber>
    </recommendedName>
</protein>
<evidence type="ECO:0000255" key="1">
    <source>
        <dbReference type="HAMAP-Rule" id="MF_01072"/>
    </source>
</evidence>
<evidence type="ECO:0000256" key="2">
    <source>
        <dbReference type="SAM" id="MobiDB-lite"/>
    </source>
</evidence>